<proteinExistence type="inferred from homology"/>
<sequence>MAKRGKKYVEAAKLVDRAAAYSATEAVELVKKTNTAKFDATVEAAFRLGVDPKKADQQIRGAVVLPHGTGKVQRVLVFAKGEKAKEAEAAGADFVGDADYIGKIQQGWFDFDVVVATPDMMGEVGKLGRVLGPKGLMPNPKTGTVTFDVTKAVNEIKAGKVEYRVDKAGNIHVPIGKVSFEDAKLVENFRTIADTLQKVKPAAAKGTYMKNVTVASTMGPGVRVDVSTLA</sequence>
<gene>
    <name evidence="1" type="primary">rplA</name>
    <name type="ordered locus">BAMEG_0113</name>
</gene>
<reference key="1">
    <citation type="submission" date="2008-10" db="EMBL/GenBank/DDBJ databases">
        <title>Genome sequence of Bacillus anthracis str. CDC 684.</title>
        <authorList>
            <person name="Dodson R.J."/>
            <person name="Munk A.C."/>
            <person name="Brettin T."/>
            <person name="Bruce D."/>
            <person name="Detter C."/>
            <person name="Tapia R."/>
            <person name="Han C."/>
            <person name="Sutton G."/>
            <person name="Sims D."/>
        </authorList>
    </citation>
    <scope>NUCLEOTIDE SEQUENCE [LARGE SCALE GENOMIC DNA]</scope>
    <source>
        <strain>CDC 684 / NRRL 3495</strain>
    </source>
</reference>
<name>RL1_BACAC</name>
<organism>
    <name type="scientific">Bacillus anthracis (strain CDC 684 / NRRL 3495)</name>
    <dbReference type="NCBI Taxonomy" id="568206"/>
    <lineage>
        <taxon>Bacteria</taxon>
        <taxon>Bacillati</taxon>
        <taxon>Bacillota</taxon>
        <taxon>Bacilli</taxon>
        <taxon>Bacillales</taxon>
        <taxon>Bacillaceae</taxon>
        <taxon>Bacillus</taxon>
        <taxon>Bacillus cereus group</taxon>
    </lineage>
</organism>
<comment type="function">
    <text evidence="1">Binds directly to 23S rRNA. The L1 stalk is quite mobile in the ribosome, and is involved in E site tRNA release.</text>
</comment>
<comment type="function">
    <text evidence="1">Protein L1 is also a translational repressor protein, it controls the translation of the L11 operon by binding to its mRNA.</text>
</comment>
<comment type="subunit">
    <text evidence="1">Part of the 50S ribosomal subunit.</text>
</comment>
<comment type="similarity">
    <text evidence="1">Belongs to the universal ribosomal protein uL1 family.</text>
</comment>
<feature type="chain" id="PRO_1000165657" description="Large ribosomal subunit protein uL1">
    <location>
        <begin position="1"/>
        <end position="230"/>
    </location>
</feature>
<dbReference type="EMBL" id="CP001215">
    <property type="protein sequence ID" value="ACP13948.1"/>
    <property type="molecule type" value="Genomic_DNA"/>
</dbReference>
<dbReference type="RefSeq" id="WP_002020168.1">
    <property type="nucleotide sequence ID" value="NC_012581.1"/>
</dbReference>
<dbReference type="SMR" id="C3LJ70"/>
<dbReference type="GeneID" id="93010955"/>
<dbReference type="KEGG" id="bah:BAMEG_0113"/>
<dbReference type="HOGENOM" id="CLU_062853_0_0_9"/>
<dbReference type="GO" id="GO:0015934">
    <property type="term" value="C:large ribosomal subunit"/>
    <property type="evidence" value="ECO:0007669"/>
    <property type="project" value="InterPro"/>
</dbReference>
<dbReference type="GO" id="GO:0019843">
    <property type="term" value="F:rRNA binding"/>
    <property type="evidence" value="ECO:0007669"/>
    <property type="project" value="UniProtKB-UniRule"/>
</dbReference>
<dbReference type="GO" id="GO:0003735">
    <property type="term" value="F:structural constituent of ribosome"/>
    <property type="evidence" value="ECO:0007669"/>
    <property type="project" value="InterPro"/>
</dbReference>
<dbReference type="GO" id="GO:0000049">
    <property type="term" value="F:tRNA binding"/>
    <property type="evidence" value="ECO:0007669"/>
    <property type="project" value="UniProtKB-KW"/>
</dbReference>
<dbReference type="GO" id="GO:0006417">
    <property type="term" value="P:regulation of translation"/>
    <property type="evidence" value="ECO:0007669"/>
    <property type="project" value="UniProtKB-KW"/>
</dbReference>
<dbReference type="GO" id="GO:0006412">
    <property type="term" value="P:translation"/>
    <property type="evidence" value="ECO:0007669"/>
    <property type="project" value="UniProtKB-UniRule"/>
</dbReference>
<dbReference type="CDD" id="cd00403">
    <property type="entry name" value="Ribosomal_L1"/>
    <property type="match status" value="1"/>
</dbReference>
<dbReference type="FunFam" id="3.40.50.790:FF:000001">
    <property type="entry name" value="50S ribosomal protein L1"/>
    <property type="match status" value="1"/>
</dbReference>
<dbReference type="Gene3D" id="3.30.190.20">
    <property type="match status" value="1"/>
</dbReference>
<dbReference type="Gene3D" id="3.40.50.790">
    <property type="match status" value="1"/>
</dbReference>
<dbReference type="HAMAP" id="MF_01318_B">
    <property type="entry name" value="Ribosomal_uL1_B"/>
    <property type="match status" value="1"/>
</dbReference>
<dbReference type="InterPro" id="IPR005878">
    <property type="entry name" value="Ribosom_uL1_bac-type"/>
</dbReference>
<dbReference type="InterPro" id="IPR002143">
    <property type="entry name" value="Ribosomal_uL1"/>
</dbReference>
<dbReference type="InterPro" id="IPR023674">
    <property type="entry name" value="Ribosomal_uL1-like"/>
</dbReference>
<dbReference type="InterPro" id="IPR028364">
    <property type="entry name" value="Ribosomal_uL1/biogenesis"/>
</dbReference>
<dbReference type="InterPro" id="IPR016095">
    <property type="entry name" value="Ribosomal_uL1_3-a/b-sand"/>
</dbReference>
<dbReference type="InterPro" id="IPR023673">
    <property type="entry name" value="Ribosomal_uL1_CS"/>
</dbReference>
<dbReference type="NCBIfam" id="TIGR01169">
    <property type="entry name" value="rplA_bact"/>
    <property type="match status" value="1"/>
</dbReference>
<dbReference type="PANTHER" id="PTHR36427">
    <property type="entry name" value="54S RIBOSOMAL PROTEIN L1, MITOCHONDRIAL"/>
    <property type="match status" value="1"/>
</dbReference>
<dbReference type="PANTHER" id="PTHR36427:SF3">
    <property type="entry name" value="LARGE RIBOSOMAL SUBUNIT PROTEIN UL1M"/>
    <property type="match status" value="1"/>
</dbReference>
<dbReference type="Pfam" id="PF00687">
    <property type="entry name" value="Ribosomal_L1"/>
    <property type="match status" value="1"/>
</dbReference>
<dbReference type="PIRSF" id="PIRSF002155">
    <property type="entry name" value="Ribosomal_L1"/>
    <property type="match status" value="1"/>
</dbReference>
<dbReference type="SUPFAM" id="SSF56808">
    <property type="entry name" value="Ribosomal protein L1"/>
    <property type="match status" value="1"/>
</dbReference>
<dbReference type="PROSITE" id="PS01199">
    <property type="entry name" value="RIBOSOMAL_L1"/>
    <property type="match status" value="1"/>
</dbReference>
<evidence type="ECO:0000255" key="1">
    <source>
        <dbReference type="HAMAP-Rule" id="MF_01318"/>
    </source>
</evidence>
<evidence type="ECO:0000305" key="2"/>
<protein>
    <recommendedName>
        <fullName evidence="1">Large ribosomal subunit protein uL1</fullName>
    </recommendedName>
    <alternativeName>
        <fullName evidence="2">50S ribosomal protein L1</fullName>
    </alternativeName>
</protein>
<accession>C3LJ70</accession>
<keyword id="KW-0678">Repressor</keyword>
<keyword id="KW-0687">Ribonucleoprotein</keyword>
<keyword id="KW-0689">Ribosomal protein</keyword>
<keyword id="KW-0694">RNA-binding</keyword>
<keyword id="KW-0699">rRNA-binding</keyword>
<keyword id="KW-0810">Translation regulation</keyword>
<keyword id="KW-0820">tRNA-binding</keyword>